<protein>
    <recommendedName>
        <fullName evidence="1">NAD(P)H dehydrogenase (quinone)</fullName>
        <ecNumber evidence="1">1.6.5.2</ecNumber>
    </recommendedName>
    <alternativeName>
        <fullName>Flavoprotein WrbA</fullName>
    </alternativeName>
    <alternativeName>
        <fullName evidence="1">NAD(P)H:quinone oxidoreductase</fullName>
        <shortName evidence="1">NQO</shortName>
    </alternativeName>
</protein>
<name>NQOR_BRUA4</name>
<evidence type="ECO:0000255" key="1">
    <source>
        <dbReference type="HAMAP-Rule" id="MF_01017"/>
    </source>
</evidence>
<evidence type="ECO:0000256" key="2">
    <source>
        <dbReference type="SAM" id="MobiDB-lite"/>
    </source>
</evidence>
<accession>A6X0U8</accession>
<reference key="1">
    <citation type="journal article" date="2011" name="J. Bacteriol.">
        <title>Genome of Ochrobactrum anthropi ATCC 49188 T, a versatile opportunistic pathogen and symbiont of several eukaryotic hosts.</title>
        <authorList>
            <person name="Chain P.S."/>
            <person name="Lang D.M."/>
            <person name="Comerci D.J."/>
            <person name="Malfatti S.A."/>
            <person name="Vergez L.M."/>
            <person name="Shin M."/>
            <person name="Ugalde R.A."/>
            <person name="Garcia E."/>
            <person name="Tolmasky M.E."/>
        </authorList>
    </citation>
    <scope>NUCLEOTIDE SEQUENCE [LARGE SCALE GENOMIC DNA]</scope>
    <source>
        <strain>ATCC 49188 / DSM 6882 / CCUG 24695 / JCM 21032 / LMG 3331 / NBRC 15819 / NCTC 12168 / Alc 37</strain>
    </source>
</reference>
<sequence>MVKVLVLYYSAYGHMEKMAKAAAEGAREGGAEVTIKRVPELVPPDVAKASHYKIDQDAPIATPAELADYDAIIIGTATRYGMMAAQMKNFLDQTGGLWAKGALINKVGSVMVSTATQHGGAELALISTQWQMQHQGMIIVPLSYAYQGQMGNDVVRGGAPYGMTTTADGDGSRQPSEQELDGARFQGKRVAEITAKLNS</sequence>
<keyword id="KW-0285">Flavoprotein</keyword>
<keyword id="KW-0288">FMN</keyword>
<keyword id="KW-0520">NAD</keyword>
<keyword id="KW-0521">NADP</keyword>
<keyword id="KW-0547">Nucleotide-binding</keyword>
<keyword id="KW-0560">Oxidoreductase</keyword>
<keyword id="KW-1185">Reference proteome</keyword>
<comment type="catalytic activity">
    <reaction evidence="1">
        <text>a quinone + NADH + H(+) = a quinol + NAD(+)</text>
        <dbReference type="Rhea" id="RHEA:46160"/>
        <dbReference type="ChEBI" id="CHEBI:15378"/>
        <dbReference type="ChEBI" id="CHEBI:24646"/>
        <dbReference type="ChEBI" id="CHEBI:57540"/>
        <dbReference type="ChEBI" id="CHEBI:57945"/>
        <dbReference type="ChEBI" id="CHEBI:132124"/>
        <dbReference type="EC" id="1.6.5.2"/>
    </reaction>
</comment>
<comment type="catalytic activity">
    <reaction evidence="1">
        <text>a quinone + NADPH + H(+) = a quinol + NADP(+)</text>
        <dbReference type="Rhea" id="RHEA:46164"/>
        <dbReference type="ChEBI" id="CHEBI:15378"/>
        <dbReference type="ChEBI" id="CHEBI:24646"/>
        <dbReference type="ChEBI" id="CHEBI:57783"/>
        <dbReference type="ChEBI" id="CHEBI:58349"/>
        <dbReference type="ChEBI" id="CHEBI:132124"/>
        <dbReference type="EC" id="1.6.5.2"/>
    </reaction>
</comment>
<comment type="cofactor">
    <cofactor evidence="1">
        <name>FMN</name>
        <dbReference type="ChEBI" id="CHEBI:58210"/>
    </cofactor>
    <text evidence="1">Binds 1 FMN per monomer.</text>
</comment>
<comment type="similarity">
    <text evidence="1">Belongs to the WrbA family.</text>
</comment>
<dbReference type="EC" id="1.6.5.2" evidence="1"/>
<dbReference type="EMBL" id="CP000758">
    <property type="protein sequence ID" value="ABS14852.1"/>
    <property type="molecule type" value="Genomic_DNA"/>
</dbReference>
<dbReference type="SMR" id="A6X0U8"/>
<dbReference type="STRING" id="439375.Oant_2136"/>
<dbReference type="CAZy" id="AA6">
    <property type="family name" value="Auxiliary Activities 6"/>
</dbReference>
<dbReference type="KEGG" id="oan:Oant_2136"/>
<dbReference type="PATRIC" id="fig|439375.7.peg.2243"/>
<dbReference type="eggNOG" id="COG0655">
    <property type="taxonomic scope" value="Bacteria"/>
</dbReference>
<dbReference type="HOGENOM" id="CLU_051402_0_2_5"/>
<dbReference type="PhylomeDB" id="A6X0U8"/>
<dbReference type="Proteomes" id="UP000002301">
    <property type="component" value="Chromosome 1"/>
</dbReference>
<dbReference type="GO" id="GO:0016020">
    <property type="term" value="C:membrane"/>
    <property type="evidence" value="ECO:0007669"/>
    <property type="project" value="TreeGrafter"/>
</dbReference>
<dbReference type="GO" id="GO:0050660">
    <property type="term" value="F:flavin adenine dinucleotide binding"/>
    <property type="evidence" value="ECO:0007669"/>
    <property type="project" value="UniProtKB-UniRule"/>
</dbReference>
<dbReference type="GO" id="GO:0010181">
    <property type="term" value="F:FMN binding"/>
    <property type="evidence" value="ECO:0007669"/>
    <property type="project" value="InterPro"/>
</dbReference>
<dbReference type="GO" id="GO:0051287">
    <property type="term" value="F:NAD binding"/>
    <property type="evidence" value="ECO:0007669"/>
    <property type="project" value="UniProtKB-UniRule"/>
</dbReference>
<dbReference type="GO" id="GO:0050136">
    <property type="term" value="F:NADH:ubiquinone reductase (non-electrogenic) activity"/>
    <property type="evidence" value="ECO:0007669"/>
    <property type="project" value="RHEA"/>
</dbReference>
<dbReference type="GO" id="GO:0050661">
    <property type="term" value="F:NADP binding"/>
    <property type="evidence" value="ECO:0007669"/>
    <property type="project" value="UniProtKB-UniRule"/>
</dbReference>
<dbReference type="GO" id="GO:0008753">
    <property type="term" value="F:NADPH dehydrogenase (quinone) activity"/>
    <property type="evidence" value="ECO:0007669"/>
    <property type="project" value="RHEA"/>
</dbReference>
<dbReference type="FunFam" id="3.40.50.360:FF:000001">
    <property type="entry name" value="NAD(P)H dehydrogenase (Quinone) FQR1-like"/>
    <property type="match status" value="1"/>
</dbReference>
<dbReference type="Gene3D" id="3.40.50.360">
    <property type="match status" value="1"/>
</dbReference>
<dbReference type="HAMAP" id="MF_01017">
    <property type="entry name" value="NQOR"/>
    <property type="match status" value="1"/>
</dbReference>
<dbReference type="InterPro" id="IPR008254">
    <property type="entry name" value="Flavodoxin/NO_synth"/>
</dbReference>
<dbReference type="InterPro" id="IPR029039">
    <property type="entry name" value="Flavoprotein-like_sf"/>
</dbReference>
<dbReference type="InterPro" id="IPR010089">
    <property type="entry name" value="Flavoprotein_WrbA-like"/>
</dbReference>
<dbReference type="InterPro" id="IPR005025">
    <property type="entry name" value="FMN_Rdtase-like_dom"/>
</dbReference>
<dbReference type="InterPro" id="IPR037513">
    <property type="entry name" value="NQO"/>
</dbReference>
<dbReference type="NCBIfam" id="TIGR01755">
    <property type="entry name" value="flav_wrbA"/>
    <property type="match status" value="1"/>
</dbReference>
<dbReference type="NCBIfam" id="NF002999">
    <property type="entry name" value="PRK03767.1"/>
    <property type="match status" value="1"/>
</dbReference>
<dbReference type="PANTHER" id="PTHR30546">
    <property type="entry name" value="FLAVODOXIN-RELATED PROTEIN WRBA-RELATED"/>
    <property type="match status" value="1"/>
</dbReference>
<dbReference type="PANTHER" id="PTHR30546:SF23">
    <property type="entry name" value="FLAVOPROTEIN-LIKE PROTEIN YCP4-RELATED"/>
    <property type="match status" value="1"/>
</dbReference>
<dbReference type="Pfam" id="PF03358">
    <property type="entry name" value="FMN_red"/>
    <property type="match status" value="1"/>
</dbReference>
<dbReference type="SUPFAM" id="SSF52218">
    <property type="entry name" value="Flavoproteins"/>
    <property type="match status" value="1"/>
</dbReference>
<dbReference type="PROSITE" id="PS50902">
    <property type="entry name" value="FLAVODOXIN_LIKE"/>
    <property type="match status" value="1"/>
</dbReference>
<organism>
    <name type="scientific">Brucella anthropi (strain ATCC 49188 / DSM 6882 / CCUG 24695 / JCM 21032 / LMG 3331 / NBRC 15819 / NCTC 12168 / Alc 37)</name>
    <name type="common">Ochrobactrum anthropi</name>
    <dbReference type="NCBI Taxonomy" id="439375"/>
    <lineage>
        <taxon>Bacteria</taxon>
        <taxon>Pseudomonadati</taxon>
        <taxon>Pseudomonadota</taxon>
        <taxon>Alphaproteobacteria</taxon>
        <taxon>Hyphomicrobiales</taxon>
        <taxon>Brucellaceae</taxon>
        <taxon>Brucella/Ochrobactrum group</taxon>
        <taxon>Brucella</taxon>
    </lineage>
</organism>
<proteinExistence type="inferred from homology"/>
<gene>
    <name type="ordered locus">Oant_2136</name>
</gene>
<feature type="chain" id="PRO_1000084143" description="NAD(P)H dehydrogenase (quinone)">
    <location>
        <begin position="1"/>
        <end position="199"/>
    </location>
</feature>
<feature type="domain" description="Flavodoxin-like" evidence="1">
    <location>
        <begin position="4"/>
        <end position="190"/>
    </location>
</feature>
<feature type="region of interest" description="Disordered" evidence="2">
    <location>
        <begin position="157"/>
        <end position="185"/>
    </location>
</feature>
<feature type="compositionally biased region" description="Polar residues" evidence="2">
    <location>
        <begin position="163"/>
        <end position="177"/>
    </location>
</feature>
<feature type="binding site" evidence="1">
    <location>
        <begin position="10"/>
        <end position="15"/>
    </location>
    <ligand>
        <name>FMN</name>
        <dbReference type="ChEBI" id="CHEBI:58210"/>
    </ligand>
</feature>
<feature type="binding site" evidence="1">
    <location>
        <position position="12"/>
    </location>
    <ligand>
        <name>NAD(+)</name>
        <dbReference type="ChEBI" id="CHEBI:57540"/>
    </ligand>
</feature>
<feature type="binding site" evidence="1">
    <location>
        <begin position="78"/>
        <end position="80"/>
    </location>
    <ligand>
        <name>FMN</name>
        <dbReference type="ChEBI" id="CHEBI:58210"/>
    </ligand>
</feature>
<feature type="binding site" evidence="1">
    <location>
        <position position="98"/>
    </location>
    <ligand>
        <name>substrate</name>
    </ligand>
</feature>
<feature type="binding site" evidence="1">
    <location>
        <begin position="113"/>
        <end position="119"/>
    </location>
    <ligand>
        <name>FMN</name>
        <dbReference type="ChEBI" id="CHEBI:58210"/>
    </ligand>
</feature>
<feature type="binding site" evidence="1">
    <location>
        <position position="134"/>
    </location>
    <ligand>
        <name>FMN</name>
        <dbReference type="ChEBI" id="CHEBI:58210"/>
    </ligand>
</feature>